<comment type="function">
    <text evidence="1">Provides the precursors necessary for DNA synthesis. Catalyzes the biosynthesis of deoxyribonucleotides from the corresponding ribonucleotides (By similarity).</text>
</comment>
<comment type="catalytic activity">
    <reaction>
        <text>a 2'-deoxyribonucleoside 5'-diphosphate + [thioredoxin]-disulfide + H2O = a ribonucleoside 5'-diphosphate + [thioredoxin]-dithiol</text>
        <dbReference type="Rhea" id="RHEA:23252"/>
        <dbReference type="Rhea" id="RHEA-COMP:10698"/>
        <dbReference type="Rhea" id="RHEA-COMP:10700"/>
        <dbReference type="ChEBI" id="CHEBI:15377"/>
        <dbReference type="ChEBI" id="CHEBI:29950"/>
        <dbReference type="ChEBI" id="CHEBI:50058"/>
        <dbReference type="ChEBI" id="CHEBI:57930"/>
        <dbReference type="ChEBI" id="CHEBI:73316"/>
        <dbReference type="EC" id="1.17.4.1"/>
    </reaction>
</comment>
<comment type="activity regulation">
    <text evidence="2">Under complex allosteric control mediated by deoxynucleoside triphosphates and ATP binding to separate specificity and activation sites on the M1 subunit. The type of nucleotide bound at the specificity site determines substrate preference. It seems probable that ATP makes the enzyme reduce CDP and UDP, dGTP favors ADP reduction and dTTP favors GDP reduction. Stimulated by ATP and inhibited by dATP binding to the activity site, the dATP inhibition is mediated by AHCYL1 which stabilizes dATP in the site (By similarity).</text>
</comment>
<comment type="subunit">
    <text evidence="2">Heterodimer of a large and a small subunit. Interacts with RRM2B. Interacts with AHCYL1 which inhibits its activity (By similarity).</text>
</comment>
<comment type="subcellular location">
    <subcellularLocation>
        <location evidence="1">Cytoplasm</location>
    </subcellularLocation>
</comment>
<comment type="miscellaneous">
    <text evidence="1">Two distinct regulatory sites have been defined: the specificity site, which controls substrate specificity, and the activity site which regulates overall catalytic activity. A substrate-binding catalytic site, located on M1, is formed only in the presence of the second subunit M2 (By similarity).</text>
</comment>
<comment type="similarity">
    <text evidence="4">Belongs to the ribonucleoside diphosphate reductase large chain family.</text>
</comment>
<gene>
    <name type="primary">RRM1</name>
</gene>
<keyword id="KW-0007">Acetylation</keyword>
<keyword id="KW-0021">Allosteric enzyme</keyword>
<keyword id="KW-0067">ATP-binding</keyword>
<keyword id="KW-0963">Cytoplasm</keyword>
<keyword id="KW-0215">Deoxyribonucleotide synthesis</keyword>
<keyword id="KW-1015">Disulfide bond</keyword>
<keyword id="KW-0547">Nucleotide-binding</keyword>
<keyword id="KW-0560">Oxidoreductase</keyword>
<keyword id="KW-0597">Phosphoprotein</keyword>
<keyword id="KW-1185">Reference proteome</keyword>
<evidence type="ECO:0000250" key="1"/>
<evidence type="ECO:0000250" key="2">
    <source>
        <dbReference type="UniProtKB" id="P23921"/>
    </source>
</evidence>
<evidence type="ECO:0000255" key="3">
    <source>
        <dbReference type="PROSITE-ProRule" id="PRU00492"/>
    </source>
</evidence>
<evidence type="ECO:0000305" key="4"/>
<reference key="1">
    <citation type="submission" date="2004-11" db="EMBL/GenBank/DDBJ databases">
        <authorList>
            <consortium name="The German cDNA consortium"/>
        </authorList>
    </citation>
    <scope>NUCLEOTIDE SEQUENCE [LARGE SCALE MRNA]</scope>
    <source>
        <tissue>Heart</tissue>
    </source>
</reference>
<proteinExistence type="evidence at transcript level"/>
<accession>Q5R919</accession>
<protein>
    <recommendedName>
        <fullName>Ribonucleoside-diphosphate reductase large subunit</fullName>
        <ecNumber>1.17.4.1</ecNumber>
    </recommendedName>
    <alternativeName>
        <fullName>Ribonucleoside-diphosphate reductase subunit M1</fullName>
    </alternativeName>
    <alternativeName>
        <fullName>Ribonucleotide reductase large subunit</fullName>
    </alternativeName>
</protein>
<name>RIR1_PONAB</name>
<organism>
    <name type="scientific">Pongo abelii</name>
    <name type="common">Sumatran orangutan</name>
    <name type="synonym">Pongo pygmaeus abelii</name>
    <dbReference type="NCBI Taxonomy" id="9601"/>
    <lineage>
        <taxon>Eukaryota</taxon>
        <taxon>Metazoa</taxon>
        <taxon>Chordata</taxon>
        <taxon>Craniata</taxon>
        <taxon>Vertebrata</taxon>
        <taxon>Euteleostomi</taxon>
        <taxon>Mammalia</taxon>
        <taxon>Eutheria</taxon>
        <taxon>Euarchontoglires</taxon>
        <taxon>Primates</taxon>
        <taxon>Haplorrhini</taxon>
        <taxon>Catarrhini</taxon>
        <taxon>Hominidae</taxon>
        <taxon>Pongo</taxon>
    </lineage>
</organism>
<sequence length="792" mass="90027">MHVIKRDGRQERVMFDKITSRIQKLCYGLNMDFVDPAQITMKVIQGLYSGVTTVELDTLAAETAATLTTKHPDYAILAARIAVSNLHKEAKKVFSDVMEDLYNYINPHNGKHSPMVAKSTLDIVLANKDRLNSAIIYDRDFSYNYFGFKTLERSYLLKINGKVAERPQHMLMRVSVGIHKEDIDAAIETYNLLSERWFTHASPTLFNAGTNRPQLSSCFLLSMKDDSIEGIYDTLKQCALISKSAGGIGVAVSCIRATGSYIAGTNGNSNGLVPMLRVYNNTARYVDQGGNKRPGAFAIYLEPWHLDIFEFLDLKKNTGKEEQRARDLFFALWIPDLFMKRVETNQDWSLMCPNECPGLDEVWGEEFEKLYASYEKQGRVRKVVKAQQLWYAIIESQTETGTPYMLYKDSCNRKSNQQNLGTIKCSSLCTEIVEYTSKDEVAVCNLASLALNMYVTSEHTYDFKKLAEVTKVVVRNLNKIIDINYYPVPEACLSNKRHRPIGIGVQGLADAFILMRYPFESAEAQLLNKQIFETIYYGALEASCDLAKEQGPYETYEGSPVSKGILQYDMWNVTPTDLWDWKLLKEKIAKYGIRNSLLIAPMPTASTAQILGNNESIEPYTSNIYTRRVLSGEFQIVNPHLLKDLTERGLWHEEMKNQIIACNGSIQSIPEIPDDLKQLYKTVWEISQKTVLKMAAERGAFIDQSQSLNIHIAEPNYGKLTSMHFYGWKQGLKTGMYYLRTRPAANPIQFTLNKEKLKDKEKVSKEEEEKERNTAAMVCSLENRDECLMCGS</sequence>
<dbReference type="EC" id="1.17.4.1"/>
<dbReference type="EMBL" id="CR859577">
    <property type="protein sequence ID" value="CAH91741.1"/>
    <property type="molecule type" value="mRNA"/>
</dbReference>
<dbReference type="RefSeq" id="NP_001126012.1">
    <property type="nucleotide sequence ID" value="NM_001132540.2"/>
</dbReference>
<dbReference type="SMR" id="Q5R919"/>
<dbReference type="STRING" id="9601.ENSPPYP00000004146"/>
<dbReference type="GeneID" id="100172956"/>
<dbReference type="KEGG" id="pon:100172956"/>
<dbReference type="CTD" id="6240"/>
<dbReference type="eggNOG" id="KOG1112">
    <property type="taxonomic scope" value="Eukaryota"/>
</dbReference>
<dbReference type="InParanoid" id="Q5R919"/>
<dbReference type="OrthoDB" id="3000483at2759"/>
<dbReference type="Proteomes" id="UP000001595">
    <property type="component" value="Unplaced"/>
</dbReference>
<dbReference type="GO" id="GO:0005971">
    <property type="term" value="C:ribonucleoside-diphosphate reductase complex"/>
    <property type="evidence" value="ECO:0007669"/>
    <property type="project" value="TreeGrafter"/>
</dbReference>
<dbReference type="GO" id="GO:0005524">
    <property type="term" value="F:ATP binding"/>
    <property type="evidence" value="ECO:0007669"/>
    <property type="project" value="UniProtKB-KW"/>
</dbReference>
<dbReference type="GO" id="GO:0004748">
    <property type="term" value="F:ribonucleoside-diphosphate reductase activity, thioredoxin disulfide as acceptor"/>
    <property type="evidence" value="ECO:0000250"/>
    <property type="project" value="UniProtKB"/>
</dbReference>
<dbReference type="GO" id="GO:0009263">
    <property type="term" value="P:deoxyribonucleotide biosynthetic process"/>
    <property type="evidence" value="ECO:0000250"/>
    <property type="project" value="UniProtKB"/>
</dbReference>
<dbReference type="CDD" id="cd01679">
    <property type="entry name" value="RNR_I"/>
    <property type="match status" value="1"/>
</dbReference>
<dbReference type="FunFam" id="3.20.70.20:FF:000001">
    <property type="entry name" value="Ribonucleoside-diphosphate reductase"/>
    <property type="match status" value="1"/>
</dbReference>
<dbReference type="Gene3D" id="3.20.70.20">
    <property type="match status" value="1"/>
</dbReference>
<dbReference type="InterPro" id="IPR005144">
    <property type="entry name" value="ATP-cone_dom"/>
</dbReference>
<dbReference type="InterPro" id="IPR013346">
    <property type="entry name" value="NrdE_NrdA_C"/>
</dbReference>
<dbReference type="InterPro" id="IPR000788">
    <property type="entry name" value="RNR_lg_C"/>
</dbReference>
<dbReference type="InterPro" id="IPR013509">
    <property type="entry name" value="RNR_lsu_N"/>
</dbReference>
<dbReference type="InterPro" id="IPR008926">
    <property type="entry name" value="RNR_R1-su_N"/>
</dbReference>
<dbReference type="InterPro" id="IPR039718">
    <property type="entry name" value="Rrm1"/>
</dbReference>
<dbReference type="NCBIfam" id="TIGR02506">
    <property type="entry name" value="NrdE_NrdA"/>
    <property type="match status" value="1"/>
</dbReference>
<dbReference type="PANTHER" id="PTHR11573">
    <property type="entry name" value="RIBONUCLEOSIDE-DIPHOSPHATE REDUCTASE LARGE CHAIN"/>
    <property type="match status" value="1"/>
</dbReference>
<dbReference type="PANTHER" id="PTHR11573:SF6">
    <property type="entry name" value="RIBONUCLEOSIDE-DIPHOSPHATE REDUCTASE LARGE SUBUNIT"/>
    <property type="match status" value="1"/>
</dbReference>
<dbReference type="Pfam" id="PF03477">
    <property type="entry name" value="ATP-cone"/>
    <property type="match status" value="1"/>
</dbReference>
<dbReference type="Pfam" id="PF02867">
    <property type="entry name" value="Ribonuc_red_lgC"/>
    <property type="match status" value="1"/>
</dbReference>
<dbReference type="Pfam" id="PF00317">
    <property type="entry name" value="Ribonuc_red_lgN"/>
    <property type="match status" value="1"/>
</dbReference>
<dbReference type="PRINTS" id="PR01183">
    <property type="entry name" value="RIBORDTASEM1"/>
</dbReference>
<dbReference type="SUPFAM" id="SSF51998">
    <property type="entry name" value="PFL-like glycyl radical enzymes"/>
    <property type="match status" value="1"/>
</dbReference>
<dbReference type="SUPFAM" id="SSF48168">
    <property type="entry name" value="R1 subunit of ribonucleotide reductase, N-terminal domain"/>
    <property type="match status" value="1"/>
</dbReference>
<dbReference type="PROSITE" id="PS51161">
    <property type="entry name" value="ATP_CONE"/>
    <property type="match status" value="1"/>
</dbReference>
<dbReference type="PROSITE" id="PS00089">
    <property type="entry name" value="RIBORED_LARGE"/>
    <property type="match status" value="1"/>
</dbReference>
<feature type="chain" id="PRO_0000290352" description="Ribonucleoside-diphosphate reductase large subunit">
    <location>
        <begin position="1"/>
        <end position="792"/>
    </location>
</feature>
<feature type="domain" description="ATP-cone" evidence="3">
    <location>
        <begin position="1"/>
        <end position="92"/>
    </location>
</feature>
<feature type="active site" description="Proton acceptor" evidence="1">
    <location>
        <position position="427"/>
    </location>
</feature>
<feature type="active site" description="Cysteine radical intermediate" evidence="1">
    <location>
        <position position="429"/>
    </location>
</feature>
<feature type="active site" description="Proton acceptor" evidence="1">
    <location>
        <position position="431"/>
    </location>
</feature>
<feature type="binding site" evidence="2">
    <location>
        <begin position="5"/>
        <end position="6"/>
    </location>
    <ligand>
        <name>ATP</name>
        <dbReference type="ChEBI" id="CHEBI:30616"/>
        <note>allosteric activator</note>
    </ligand>
</feature>
<feature type="binding site" evidence="2">
    <location>
        <begin position="11"/>
        <end position="17"/>
    </location>
    <ligand>
        <name>ATP</name>
        <dbReference type="ChEBI" id="CHEBI:30616"/>
        <note>allosteric activator</note>
    </ligand>
</feature>
<feature type="binding site" evidence="2">
    <location>
        <position position="53"/>
    </location>
    <ligand>
        <name>ATP</name>
        <dbReference type="ChEBI" id="CHEBI:30616"/>
        <note>allosteric activator</note>
    </ligand>
</feature>
<feature type="binding site" evidence="2">
    <location>
        <position position="57"/>
    </location>
    <ligand>
        <name>ATP</name>
        <dbReference type="ChEBI" id="CHEBI:30616"/>
        <note>allosteric activator</note>
    </ligand>
</feature>
<feature type="binding site" evidence="2">
    <location>
        <position position="202"/>
    </location>
    <ligand>
        <name>GDP</name>
        <dbReference type="ChEBI" id="CHEBI:58189"/>
    </ligand>
</feature>
<feature type="binding site" evidence="2">
    <location>
        <position position="217"/>
    </location>
    <ligand>
        <name>GDP</name>
        <dbReference type="ChEBI" id="CHEBI:58189"/>
    </ligand>
</feature>
<feature type="binding site" evidence="2">
    <location>
        <begin position="226"/>
        <end position="228"/>
    </location>
    <ligand>
        <name>dTTP</name>
        <dbReference type="ChEBI" id="CHEBI:37568"/>
        <note>allosteric effector that controls substrate specificity</note>
    </ligand>
</feature>
<feature type="binding site" evidence="2">
    <location>
        <position position="243"/>
    </location>
    <ligand>
        <name>dTTP</name>
        <dbReference type="ChEBI" id="CHEBI:37568"/>
        <note>allosteric effector that controls substrate specificity</note>
    </ligand>
</feature>
<feature type="binding site" evidence="2">
    <location>
        <position position="256"/>
    </location>
    <ligand>
        <name>dTTP</name>
        <dbReference type="ChEBI" id="CHEBI:37568"/>
        <note>allosteric effector that controls substrate specificity</note>
    </ligand>
</feature>
<feature type="binding site" evidence="2">
    <location>
        <begin position="263"/>
        <end position="264"/>
    </location>
    <ligand>
        <name>dTTP</name>
        <dbReference type="ChEBI" id="CHEBI:37568"/>
        <note>allosteric effector that controls substrate specificity</note>
    </ligand>
</feature>
<feature type="binding site" evidence="2">
    <location>
        <position position="431"/>
    </location>
    <ligand>
        <name>GDP</name>
        <dbReference type="ChEBI" id="CHEBI:58189"/>
    </ligand>
</feature>
<feature type="binding site" evidence="2">
    <location>
        <begin position="604"/>
        <end position="607"/>
    </location>
    <ligand>
        <name>GDP</name>
        <dbReference type="ChEBI" id="CHEBI:58189"/>
    </ligand>
</feature>
<feature type="site" description="Important for hydrogen atom transfer" evidence="1">
    <location>
        <position position="218"/>
    </location>
</feature>
<feature type="site" description="Important for hydrogen atom transfer" evidence="1">
    <location>
        <position position="444"/>
    </location>
</feature>
<feature type="site" description="Important for electron transfer" evidence="1">
    <location>
        <position position="737"/>
    </location>
</feature>
<feature type="site" description="Important for electron transfer" evidence="1">
    <location>
        <position position="738"/>
    </location>
</feature>
<feature type="site" description="Interacts with thioredoxin/glutaredoxin" evidence="1">
    <location>
        <position position="787"/>
    </location>
</feature>
<feature type="site" description="Interacts with thioredoxin/glutaredoxin" evidence="1">
    <location>
        <position position="790"/>
    </location>
</feature>
<feature type="modified residue" description="N6-acetyllysine" evidence="2">
    <location>
        <position position="17"/>
    </location>
</feature>
<feature type="modified residue" description="N6-acetyllysine" evidence="2">
    <location>
        <position position="376"/>
    </location>
</feature>
<feature type="modified residue" description="Phosphothreonine" evidence="2">
    <location>
        <position position="751"/>
    </location>
</feature>
<feature type="disulfide bond" description="Redox-active" evidence="1">
    <location>
        <begin position="218"/>
        <end position="444"/>
    </location>
</feature>